<feature type="chain" id="PRO_0000286344" description="Testis-specific gene 13 protein">
    <location>
        <begin position="1"/>
        <end position="275"/>
    </location>
</feature>
<feature type="region of interest" description="Disordered" evidence="1">
    <location>
        <begin position="1"/>
        <end position="28"/>
    </location>
</feature>
<feature type="compositionally biased region" description="Polar residues" evidence="1">
    <location>
        <begin position="1"/>
        <end position="20"/>
    </location>
</feature>
<dbReference type="EMBL" id="AF294347">
    <property type="protein sequence ID" value="AAK97089.1"/>
    <property type="molecule type" value="mRNA"/>
</dbReference>
<dbReference type="EMBL" id="AF431815">
    <property type="protein sequence ID" value="AAP97305.1"/>
    <property type="molecule type" value="mRNA"/>
</dbReference>
<dbReference type="EMBL" id="AK093329">
    <property type="protein sequence ID" value="BAG52691.1"/>
    <property type="molecule type" value="mRNA"/>
</dbReference>
<dbReference type="EMBL" id="CH236950">
    <property type="protein sequence ID" value="EAL24084.1"/>
    <property type="molecule type" value="Genomic_DNA"/>
</dbReference>
<dbReference type="EMBL" id="CH471070">
    <property type="protein sequence ID" value="EAW83771.1"/>
    <property type="molecule type" value="Genomic_DNA"/>
</dbReference>
<dbReference type="EMBL" id="BC038415">
    <property type="protein sequence ID" value="AAH38415.1"/>
    <property type="molecule type" value="mRNA"/>
</dbReference>
<dbReference type="CCDS" id="CCDS5824.1"/>
<dbReference type="RefSeq" id="NP_001291897.1">
    <property type="nucleotide sequence ID" value="NM_001304968.2"/>
</dbReference>
<dbReference type="RefSeq" id="NP_443165.1">
    <property type="nucleotide sequence ID" value="NM_052933.4"/>
</dbReference>
<dbReference type="BioGRID" id="125401">
    <property type="interactions" value="4"/>
</dbReference>
<dbReference type="FunCoup" id="Q96PP4">
    <property type="interactions" value="2"/>
</dbReference>
<dbReference type="IntAct" id="Q96PP4">
    <property type="interactions" value="3"/>
</dbReference>
<dbReference type="STRING" id="9606.ENSP00000406047"/>
<dbReference type="iPTMnet" id="Q96PP4"/>
<dbReference type="PhosphoSitePlus" id="Q96PP4"/>
<dbReference type="BioMuta" id="TSGA13"/>
<dbReference type="DMDM" id="74732656"/>
<dbReference type="MassIVE" id="Q96PP4"/>
<dbReference type="PaxDb" id="9606-ENSP00000406047"/>
<dbReference type="PeptideAtlas" id="Q96PP4"/>
<dbReference type="ProteomicsDB" id="77724"/>
<dbReference type="Antibodypedia" id="46068">
    <property type="antibodies" value="101 antibodies from 18 providers"/>
</dbReference>
<dbReference type="DNASU" id="114960"/>
<dbReference type="Ensembl" id="ENST00000356588.8">
    <property type="protein sequence ID" value="ENSP00000348996.3"/>
    <property type="gene ID" value="ENSG00000213265.9"/>
</dbReference>
<dbReference type="Ensembl" id="ENST00000456951.5">
    <property type="protein sequence ID" value="ENSP00000406047.1"/>
    <property type="gene ID" value="ENSG00000213265.9"/>
</dbReference>
<dbReference type="GeneID" id="114960"/>
<dbReference type="KEGG" id="hsa:114960"/>
<dbReference type="MANE-Select" id="ENST00000356588.8">
    <property type="protein sequence ID" value="ENSP00000348996.3"/>
    <property type="RefSeq nucleotide sequence ID" value="NM_052933.4"/>
    <property type="RefSeq protein sequence ID" value="NP_443165.1"/>
</dbReference>
<dbReference type="UCSC" id="uc003vqi.4">
    <property type="organism name" value="human"/>
</dbReference>
<dbReference type="AGR" id="HGNC:12369"/>
<dbReference type="CTD" id="114960"/>
<dbReference type="DisGeNET" id="114960"/>
<dbReference type="GeneCards" id="TSGA13"/>
<dbReference type="HGNC" id="HGNC:12369">
    <property type="gene designation" value="TSGA13"/>
</dbReference>
<dbReference type="HPA" id="ENSG00000213265">
    <property type="expression patterns" value="Tissue enriched (testis)"/>
</dbReference>
<dbReference type="neXtProt" id="NX_Q96PP4"/>
<dbReference type="OpenTargets" id="ENSG00000213265"/>
<dbReference type="PharmGKB" id="PA37038"/>
<dbReference type="VEuPathDB" id="HostDB:ENSG00000213265"/>
<dbReference type="eggNOG" id="ENOG502S9MD">
    <property type="taxonomic scope" value="Eukaryota"/>
</dbReference>
<dbReference type="GeneTree" id="ENSGT00390000009822"/>
<dbReference type="HOGENOM" id="CLU_088610_0_0_1"/>
<dbReference type="InParanoid" id="Q96PP4"/>
<dbReference type="OMA" id="WIIKNAT"/>
<dbReference type="OrthoDB" id="9946729at2759"/>
<dbReference type="PAN-GO" id="Q96PP4">
    <property type="GO annotations" value="0 GO annotations based on evolutionary models"/>
</dbReference>
<dbReference type="PhylomeDB" id="Q96PP4"/>
<dbReference type="TreeFam" id="TF328772"/>
<dbReference type="PathwayCommons" id="Q96PP4"/>
<dbReference type="SignaLink" id="Q96PP4"/>
<dbReference type="BioGRID-ORCS" id="114960">
    <property type="hits" value="12 hits in 1147 CRISPR screens"/>
</dbReference>
<dbReference type="GenomeRNAi" id="114960"/>
<dbReference type="Pharos" id="Q96PP4">
    <property type="development level" value="Tdark"/>
</dbReference>
<dbReference type="PRO" id="PR:Q96PP4"/>
<dbReference type="Proteomes" id="UP000005640">
    <property type="component" value="Chromosome 7"/>
</dbReference>
<dbReference type="RNAct" id="Q96PP4">
    <property type="molecule type" value="protein"/>
</dbReference>
<dbReference type="Bgee" id="ENSG00000213265">
    <property type="expression patterns" value="Expressed in left testis and 20 other cell types or tissues"/>
</dbReference>
<dbReference type="ExpressionAtlas" id="Q96PP4">
    <property type="expression patterns" value="baseline and differential"/>
</dbReference>
<dbReference type="InterPro" id="IPR029241">
    <property type="entry name" value="TSGA13"/>
</dbReference>
<dbReference type="PANTHER" id="PTHR37352">
    <property type="entry name" value="TESTIS-SPECIFIC GENE 13 PROTEIN"/>
    <property type="match status" value="1"/>
</dbReference>
<dbReference type="PANTHER" id="PTHR37352:SF1">
    <property type="entry name" value="TESTIS-SPECIFIC GENE 13 PROTEIN"/>
    <property type="match status" value="1"/>
</dbReference>
<dbReference type="Pfam" id="PF14994">
    <property type="entry name" value="TSGA13"/>
    <property type="match status" value="1"/>
</dbReference>
<accession>Q96PP4</accession>
<accession>B3KSC9</accession>
<reference key="1">
    <citation type="submission" date="2000-08" db="EMBL/GenBank/DDBJ databases">
        <title>Identification of a testis-specific gene that maps telomeric to the MEST-COPG2 imprinting cluster on human chromosome 7q32.</title>
        <authorList>
            <person name="Blagitko-Dorfs N."/>
            <person name="Fischer U."/>
            <person name="Ropers H.-H."/>
            <person name="Kalscheuer V.M."/>
        </authorList>
    </citation>
    <scope>NUCLEOTIDE SEQUENCE [MRNA]</scope>
</reference>
<reference key="2">
    <citation type="submission" date="2001-10" db="EMBL/GenBank/DDBJ databases">
        <authorList>
            <person name="Guo J.H."/>
            <person name="Yu L."/>
        </authorList>
    </citation>
    <scope>NUCLEOTIDE SEQUENCE [LARGE SCALE MRNA]</scope>
</reference>
<reference key="3">
    <citation type="journal article" date="2004" name="Nat. Genet.">
        <title>Complete sequencing and characterization of 21,243 full-length human cDNAs.</title>
        <authorList>
            <person name="Ota T."/>
            <person name="Suzuki Y."/>
            <person name="Nishikawa T."/>
            <person name="Otsuki T."/>
            <person name="Sugiyama T."/>
            <person name="Irie R."/>
            <person name="Wakamatsu A."/>
            <person name="Hayashi K."/>
            <person name="Sato H."/>
            <person name="Nagai K."/>
            <person name="Kimura K."/>
            <person name="Makita H."/>
            <person name="Sekine M."/>
            <person name="Obayashi M."/>
            <person name="Nishi T."/>
            <person name="Shibahara T."/>
            <person name="Tanaka T."/>
            <person name="Ishii S."/>
            <person name="Yamamoto J."/>
            <person name="Saito K."/>
            <person name="Kawai Y."/>
            <person name="Isono Y."/>
            <person name="Nakamura Y."/>
            <person name="Nagahari K."/>
            <person name="Murakami K."/>
            <person name="Yasuda T."/>
            <person name="Iwayanagi T."/>
            <person name="Wagatsuma M."/>
            <person name="Shiratori A."/>
            <person name="Sudo H."/>
            <person name="Hosoiri T."/>
            <person name="Kaku Y."/>
            <person name="Kodaira H."/>
            <person name="Kondo H."/>
            <person name="Sugawara M."/>
            <person name="Takahashi M."/>
            <person name="Kanda K."/>
            <person name="Yokoi T."/>
            <person name="Furuya T."/>
            <person name="Kikkawa E."/>
            <person name="Omura Y."/>
            <person name="Abe K."/>
            <person name="Kamihara K."/>
            <person name="Katsuta N."/>
            <person name="Sato K."/>
            <person name="Tanikawa M."/>
            <person name="Yamazaki M."/>
            <person name="Ninomiya K."/>
            <person name="Ishibashi T."/>
            <person name="Yamashita H."/>
            <person name="Murakawa K."/>
            <person name="Fujimori K."/>
            <person name="Tanai H."/>
            <person name="Kimata M."/>
            <person name="Watanabe M."/>
            <person name="Hiraoka S."/>
            <person name="Chiba Y."/>
            <person name="Ishida S."/>
            <person name="Ono Y."/>
            <person name="Takiguchi S."/>
            <person name="Watanabe S."/>
            <person name="Yosida M."/>
            <person name="Hotuta T."/>
            <person name="Kusano J."/>
            <person name="Kanehori K."/>
            <person name="Takahashi-Fujii A."/>
            <person name="Hara H."/>
            <person name="Tanase T.-O."/>
            <person name="Nomura Y."/>
            <person name="Togiya S."/>
            <person name="Komai F."/>
            <person name="Hara R."/>
            <person name="Takeuchi K."/>
            <person name="Arita M."/>
            <person name="Imose N."/>
            <person name="Musashino K."/>
            <person name="Yuuki H."/>
            <person name="Oshima A."/>
            <person name="Sasaki N."/>
            <person name="Aotsuka S."/>
            <person name="Yoshikawa Y."/>
            <person name="Matsunawa H."/>
            <person name="Ichihara T."/>
            <person name="Shiohata N."/>
            <person name="Sano S."/>
            <person name="Moriya S."/>
            <person name="Momiyama H."/>
            <person name="Satoh N."/>
            <person name="Takami S."/>
            <person name="Terashima Y."/>
            <person name="Suzuki O."/>
            <person name="Nakagawa S."/>
            <person name="Senoh A."/>
            <person name="Mizoguchi H."/>
            <person name="Goto Y."/>
            <person name="Shimizu F."/>
            <person name="Wakebe H."/>
            <person name="Hishigaki H."/>
            <person name="Watanabe T."/>
            <person name="Sugiyama A."/>
            <person name="Takemoto M."/>
            <person name="Kawakami B."/>
            <person name="Yamazaki M."/>
            <person name="Watanabe K."/>
            <person name="Kumagai A."/>
            <person name="Itakura S."/>
            <person name="Fukuzumi Y."/>
            <person name="Fujimori Y."/>
            <person name="Komiyama M."/>
            <person name="Tashiro H."/>
            <person name="Tanigami A."/>
            <person name="Fujiwara T."/>
            <person name="Ono T."/>
            <person name="Yamada K."/>
            <person name="Fujii Y."/>
            <person name="Ozaki K."/>
            <person name="Hirao M."/>
            <person name="Ohmori Y."/>
            <person name="Kawabata A."/>
            <person name="Hikiji T."/>
            <person name="Kobatake N."/>
            <person name="Inagaki H."/>
            <person name="Ikema Y."/>
            <person name="Okamoto S."/>
            <person name="Okitani R."/>
            <person name="Kawakami T."/>
            <person name="Noguchi S."/>
            <person name="Itoh T."/>
            <person name="Shigeta K."/>
            <person name="Senba T."/>
            <person name="Matsumura K."/>
            <person name="Nakajima Y."/>
            <person name="Mizuno T."/>
            <person name="Morinaga M."/>
            <person name="Sasaki M."/>
            <person name="Togashi T."/>
            <person name="Oyama M."/>
            <person name="Hata H."/>
            <person name="Watanabe M."/>
            <person name="Komatsu T."/>
            <person name="Mizushima-Sugano J."/>
            <person name="Satoh T."/>
            <person name="Shirai Y."/>
            <person name="Takahashi Y."/>
            <person name="Nakagawa K."/>
            <person name="Okumura K."/>
            <person name="Nagase T."/>
            <person name="Nomura N."/>
            <person name="Kikuchi H."/>
            <person name="Masuho Y."/>
            <person name="Yamashita R."/>
            <person name="Nakai K."/>
            <person name="Yada T."/>
            <person name="Nakamura Y."/>
            <person name="Ohara O."/>
            <person name="Isogai T."/>
            <person name="Sugano S."/>
        </authorList>
    </citation>
    <scope>NUCLEOTIDE SEQUENCE [LARGE SCALE MRNA]</scope>
    <source>
        <tissue>Testis</tissue>
    </source>
</reference>
<reference key="4">
    <citation type="journal article" date="2003" name="Science">
        <title>Human chromosome 7: DNA sequence and biology.</title>
        <authorList>
            <person name="Scherer S.W."/>
            <person name="Cheung J."/>
            <person name="MacDonald J.R."/>
            <person name="Osborne L.R."/>
            <person name="Nakabayashi K."/>
            <person name="Herbrick J.-A."/>
            <person name="Carson A.R."/>
            <person name="Parker-Katiraee L."/>
            <person name="Skaug J."/>
            <person name="Khaja R."/>
            <person name="Zhang J."/>
            <person name="Hudek A.K."/>
            <person name="Li M."/>
            <person name="Haddad M."/>
            <person name="Duggan G.E."/>
            <person name="Fernandez B.A."/>
            <person name="Kanematsu E."/>
            <person name="Gentles S."/>
            <person name="Christopoulos C.C."/>
            <person name="Choufani S."/>
            <person name="Kwasnicka D."/>
            <person name="Zheng X.H."/>
            <person name="Lai Z."/>
            <person name="Nusskern D.R."/>
            <person name="Zhang Q."/>
            <person name="Gu Z."/>
            <person name="Lu F."/>
            <person name="Zeesman S."/>
            <person name="Nowaczyk M.J."/>
            <person name="Teshima I."/>
            <person name="Chitayat D."/>
            <person name="Shuman C."/>
            <person name="Weksberg R."/>
            <person name="Zackai E.H."/>
            <person name="Grebe T.A."/>
            <person name="Cox S.R."/>
            <person name="Kirkpatrick S.J."/>
            <person name="Rahman N."/>
            <person name="Friedman J.M."/>
            <person name="Heng H.H.Q."/>
            <person name="Pelicci P.G."/>
            <person name="Lo-Coco F."/>
            <person name="Belloni E."/>
            <person name="Shaffer L.G."/>
            <person name="Pober B."/>
            <person name="Morton C.C."/>
            <person name="Gusella J.F."/>
            <person name="Bruns G.A.P."/>
            <person name="Korf B.R."/>
            <person name="Quade B.J."/>
            <person name="Ligon A.H."/>
            <person name="Ferguson H."/>
            <person name="Higgins A.W."/>
            <person name="Leach N.T."/>
            <person name="Herrick S.R."/>
            <person name="Lemyre E."/>
            <person name="Farra C.G."/>
            <person name="Kim H.-G."/>
            <person name="Summers A.M."/>
            <person name="Gripp K.W."/>
            <person name="Roberts W."/>
            <person name="Szatmari P."/>
            <person name="Winsor E.J.T."/>
            <person name="Grzeschik K.-H."/>
            <person name="Teebi A."/>
            <person name="Minassian B.A."/>
            <person name="Kere J."/>
            <person name="Armengol L."/>
            <person name="Pujana M.A."/>
            <person name="Estivill X."/>
            <person name="Wilson M.D."/>
            <person name="Koop B.F."/>
            <person name="Tosi S."/>
            <person name="Moore G.E."/>
            <person name="Boright A.P."/>
            <person name="Zlotorynski E."/>
            <person name="Kerem B."/>
            <person name="Kroisel P.M."/>
            <person name="Petek E."/>
            <person name="Oscier D.G."/>
            <person name="Mould S.J."/>
            <person name="Doehner H."/>
            <person name="Doehner K."/>
            <person name="Rommens J.M."/>
            <person name="Vincent J.B."/>
            <person name="Venter J.C."/>
            <person name="Li P.W."/>
            <person name="Mural R.J."/>
            <person name="Adams M.D."/>
            <person name="Tsui L.-C."/>
        </authorList>
    </citation>
    <scope>NUCLEOTIDE SEQUENCE [LARGE SCALE GENOMIC DNA]</scope>
</reference>
<reference key="5">
    <citation type="submission" date="2005-07" db="EMBL/GenBank/DDBJ databases">
        <authorList>
            <person name="Mural R.J."/>
            <person name="Istrail S."/>
            <person name="Sutton G.G."/>
            <person name="Florea L."/>
            <person name="Halpern A.L."/>
            <person name="Mobarry C.M."/>
            <person name="Lippert R."/>
            <person name="Walenz B."/>
            <person name="Shatkay H."/>
            <person name="Dew I."/>
            <person name="Miller J.R."/>
            <person name="Flanigan M.J."/>
            <person name="Edwards N.J."/>
            <person name="Bolanos R."/>
            <person name="Fasulo D."/>
            <person name="Halldorsson B.V."/>
            <person name="Hannenhalli S."/>
            <person name="Turner R."/>
            <person name="Yooseph S."/>
            <person name="Lu F."/>
            <person name="Nusskern D.R."/>
            <person name="Shue B.C."/>
            <person name="Zheng X.H."/>
            <person name="Zhong F."/>
            <person name="Delcher A.L."/>
            <person name="Huson D.H."/>
            <person name="Kravitz S.A."/>
            <person name="Mouchard L."/>
            <person name="Reinert K."/>
            <person name="Remington K.A."/>
            <person name="Clark A.G."/>
            <person name="Waterman M.S."/>
            <person name="Eichler E.E."/>
            <person name="Adams M.D."/>
            <person name="Hunkapiller M.W."/>
            <person name="Myers E.W."/>
            <person name="Venter J.C."/>
        </authorList>
    </citation>
    <scope>NUCLEOTIDE SEQUENCE [LARGE SCALE GENOMIC DNA]</scope>
</reference>
<reference key="6">
    <citation type="journal article" date="2004" name="Genome Res.">
        <title>The status, quality, and expansion of the NIH full-length cDNA project: the Mammalian Gene Collection (MGC).</title>
        <authorList>
            <consortium name="The MGC Project Team"/>
        </authorList>
    </citation>
    <scope>NUCLEOTIDE SEQUENCE [LARGE SCALE MRNA]</scope>
    <source>
        <tissue>Brain</tissue>
    </source>
</reference>
<keyword id="KW-1267">Proteomics identification</keyword>
<keyword id="KW-1185">Reference proteome</keyword>
<sequence length="275" mass="31778">MSQKRQTKFQNGKSKTSENSSAKREKGMVVNSKEISDAVGQSKFVLENLRHYTVHPNLAQYYKPLKATALQKFLAQNRKNTSFMLKVTQYDQDKTLLIMTNNPPPCSITQQDKESASKYFSKELLLKVMESHHQHKPTENLWLPRMPQKKKLRSKLKPIFPLILSDDPTSKREQWFRFSTDNDFKSEGKYSKVYALRTQKKMYPQLTFAPVHERDMRKDASKKSASERPISKVIREPLTLASLLEDMPTRTAPGESAFRNGRAPQWIIKKATVIG</sequence>
<evidence type="ECO:0000256" key="1">
    <source>
        <dbReference type="SAM" id="MobiDB-lite"/>
    </source>
</evidence>
<proteinExistence type="evidence at protein level"/>
<name>TSG13_HUMAN</name>
<organism>
    <name type="scientific">Homo sapiens</name>
    <name type="common">Human</name>
    <dbReference type="NCBI Taxonomy" id="9606"/>
    <lineage>
        <taxon>Eukaryota</taxon>
        <taxon>Metazoa</taxon>
        <taxon>Chordata</taxon>
        <taxon>Craniata</taxon>
        <taxon>Vertebrata</taxon>
        <taxon>Euteleostomi</taxon>
        <taxon>Mammalia</taxon>
        <taxon>Eutheria</taxon>
        <taxon>Euarchontoglires</taxon>
        <taxon>Primates</taxon>
        <taxon>Haplorrhini</taxon>
        <taxon>Catarrhini</taxon>
        <taxon>Hominidae</taxon>
        <taxon>Homo</taxon>
    </lineage>
</organism>
<protein>
    <recommendedName>
        <fullName>Testis-specific gene 13 protein</fullName>
    </recommendedName>
</protein>
<gene>
    <name type="primary">TSGA13</name>
</gene>
<comment type="interaction">
    <interactant intactId="EBI-12390276">
        <id>Q96PP4</id>
    </interactant>
    <interactant intactId="EBI-744248">
        <id>P40692</id>
        <label>MLH1</label>
    </interactant>
    <organismsDiffer>false</organismsDiffer>
    <experiments>3</experiments>
</comment>
<comment type="tissue specificity">
    <text>Testis-specific.</text>
</comment>